<name>EGT1_NEUCR</name>
<accession>Q7RX33</accession>
<evidence type="ECO:0000250" key="1">
    <source>
        <dbReference type="UniProtKB" id="A0R5M8"/>
    </source>
</evidence>
<evidence type="ECO:0000250" key="2">
    <source>
        <dbReference type="UniProtKB" id="G7CFI3"/>
    </source>
</evidence>
<evidence type="ECO:0000250" key="3">
    <source>
        <dbReference type="UniProtKB" id="O94632"/>
    </source>
</evidence>
<evidence type="ECO:0000256" key="4">
    <source>
        <dbReference type="SAM" id="MobiDB-lite"/>
    </source>
</evidence>
<evidence type="ECO:0000269" key="5">
    <source>
    </source>
</evidence>
<evidence type="ECO:0000269" key="6">
    <source>
    </source>
</evidence>
<evidence type="ECO:0000269" key="7">
    <source>
    </source>
</evidence>
<evidence type="ECO:0000269" key="8">
    <source>
    </source>
</evidence>
<evidence type="ECO:0000269" key="9">
    <source>
    </source>
</evidence>
<evidence type="ECO:0000269" key="10">
    <source>
    </source>
</evidence>
<evidence type="ECO:0000269" key="11">
    <source>
    </source>
</evidence>
<evidence type="ECO:0000269" key="12">
    <source>
    </source>
</evidence>
<evidence type="ECO:0000269" key="13">
    <source>
    </source>
</evidence>
<evidence type="ECO:0000269" key="14">
    <source>
    </source>
</evidence>
<evidence type="ECO:0000269" key="15">
    <source>
    </source>
</evidence>
<evidence type="ECO:0000269" key="16">
    <source>
    </source>
</evidence>
<evidence type="ECO:0000269" key="17">
    <source>
    </source>
</evidence>
<evidence type="ECO:0000269" key="18">
    <source>
    </source>
</evidence>
<evidence type="ECO:0000269" key="19">
    <source>
    </source>
</evidence>
<evidence type="ECO:0000269" key="20">
    <source>
    </source>
</evidence>
<evidence type="ECO:0000303" key="21">
    <source>
    </source>
</evidence>
<evidence type="ECO:0000305" key="22"/>
<evidence type="ECO:0000305" key="23">
    <source>
    </source>
</evidence>
<evidence type="ECO:0000305" key="24">
    <source>
    </source>
</evidence>
<reference key="1">
    <citation type="journal article" date="2003" name="Nature">
        <title>The genome sequence of the filamentous fungus Neurospora crassa.</title>
        <authorList>
            <person name="Galagan J.E."/>
            <person name="Calvo S.E."/>
            <person name="Borkovich K.A."/>
            <person name="Selker E.U."/>
            <person name="Read N.D."/>
            <person name="Jaffe D.B."/>
            <person name="FitzHugh W."/>
            <person name="Ma L.-J."/>
            <person name="Smirnov S."/>
            <person name="Purcell S."/>
            <person name="Rehman B."/>
            <person name="Elkins T."/>
            <person name="Engels R."/>
            <person name="Wang S."/>
            <person name="Nielsen C.B."/>
            <person name="Butler J."/>
            <person name="Endrizzi M."/>
            <person name="Qui D."/>
            <person name="Ianakiev P."/>
            <person name="Bell-Pedersen D."/>
            <person name="Nelson M.A."/>
            <person name="Werner-Washburne M."/>
            <person name="Selitrennikoff C.P."/>
            <person name="Kinsey J.A."/>
            <person name="Braun E.L."/>
            <person name="Zelter A."/>
            <person name="Schulte U."/>
            <person name="Kothe G.O."/>
            <person name="Jedd G."/>
            <person name="Mewes H.-W."/>
            <person name="Staben C."/>
            <person name="Marcotte E."/>
            <person name="Greenberg D."/>
            <person name="Roy A."/>
            <person name="Foley K."/>
            <person name="Naylor J."/>
            <person name="Stange-Thomann N."/>
            <person name="Barrett R."/>
            <person name="Gnerre S."/>
            <person name="Kamal M."/>
            <person name="Kamvysselis M."/>
            <person name="Mauceli E.W."/>
            <person name="Bielke C."/>
            <person name="Rudd S."/>
            <person name="Frishman D."/>
            <person name="Krystofova S."/>
            <person name="Rasmussen C."/>
            <person name="Metzenberg R.L."/>
            <person name="Perkins D.D."/>
            <person name="Kroken S."/>
            <person name="Cogoni C."/>
            <person name="Macino G."/>
            <person name="Catcheside D.E.A."/>
            <person name="Li W."/>
            <person name="Pratt R.J."/>
            <person name="Osmani S.A."/>
            <person name="DeSouza C.P.C."/>
            <person name="Glass N.L."/>
            <person name="Orbach M.J."/>
            <person name="Berglund J.A."/>
            <person name="Voelker R."/>
            <person name="Yarden O."/>
            <person name="Plamann M."/>
            <person name="Seiler S."/>
            <person name="Dunlap J.C."/>
            <person name="Radford A."/>
            <person name="Aramayo R."/>
            <person name="Natvig D.O."/>
            <person name="Alex L.A."/>
            <person name="Mannhaupt G."/>
            <person name="Ebbole D.J."/>
            <person name="Freitag M."/>
            <person name="Paulsen I."/>
            <person name="Sachs M.S."/>
            <person name="Lander E.S."/>
            <person name="Nusbaum C."/>
            <person name="Birren B.W."/>
        </authorList>
    </citation>
    <scope>NUCLEOTIDE SEQUENCE [LARGE SCALE GENOMIC DNA]</scope>
    <source>
        <strain>ATCC 24698 / 74-OR23-1A / CBS 708.71 / DSM 1257 / FGSC 987</strain>
    </source>
</reference>
<reference key="2">
    <citation type="journal article" date="1970" name="J. Biol. Chem.">
        <title>The enzymatic alpha-N-methylation of histidine.</title>
        <authorList>
            <person name="Ishikawa Y."/>
            <person name="Melville D.B."/>
        </authorList>
    </citation>
    <scope>CATALYTIC ACTIVITY</scope>
</reference>
<reference key="3">
    <citation type="journal article" date="1971" name="J. Med. Chem.">
        <title>Interaction of ergothioneine with metal ions and metalloenzymes.</title>
        <authorList>
            <person name="Hanlon D.P."/>
        </authorList>
    </citation>
    <scope>BIOTECHNOLOGY</scope>
</reference>
<reference key="4">
    <citation type="journal article" date="1974" name="J. Biol. Chem.">
        <title>Participation of an intermediate sulfoxide in the enzymatic thiolation of the imidazole ring of hercynine to form ergothioneine.</title>
        <authorList>
            <person name="Ishikawa Y."/>
            <person name="Israel S.E."/>
            <person name="Melville D.B."/>
        </authorList>
    </citation>
    <scope>CATALYTIC ACTIVITY</scope>
</reference>
<reference key="5">
    <citation type="journal article" date="1976" name="Chem. Pharm. Bull.">
        <title>Complexing of copper ion by ergothioneine.</title>
        <authorList>
            <person name="Motohashi N."/>
            <person name="Mori I."/>
            <person name="Sugiura Y."/>
        </authorList>
    </citation>
    <scope>BIOTECHNOLOGY</scope>
</reference>
<reference key="6">
    <citation type="journal article" date="1977" name="Chem. Pharm. Bull.">
        <title>Radioprotective effect of ergothioneine on gamma-irradiation of metmyoglobin: comparison with cysteine on sulfmyoglobin-formation.</title>
        <authorList>
            <person name="Motohashi N."/>
            <person name="Mori I."/>
            <person name="Sugiura Y."/>
            <person name="Tanaka H."/>
        </authorList>
    </citation>
    <scope>BIOTECHNOLOGY</scope>
</reference>
<reference key="7">
    <citation type="journal article" date="1982" name="Chem. Pharm. Bull.">
        <title>Studies on ergothioneine. VII. Some effects on ergothioneine on glycolytic metabolism in red blood cells from rats.</title>
        <authorList>
            <person name="Kawano H."/>
            <person name="Higuchi F."/>
            <person name="Mayumi T."/>
            <person name="Hama T."/>
        </authorList>
    </citation>
    <scope>BIOTECHNOLOGY</scope>
</reference>
<reference key="8">
    <citation type="journal article" date="1990" name="Methods Enzymol.">
        <title>Ergothioneine as antioxidant.</title>
        <authorList>
            <person name="Hartman P.E."/>
        </authorList>
    </citation>
    <scope>BIOTECHNOLOGY</scope>
</reference>
<reference key="9">
    <citation type="journal article" date="1991" name="Arch. Biochem. Biophys.">
        <title>The antioxidant action of ergothioneine.</title>
        <authorList>
            <person name="Akanmu D."/>
            <person name="Cecchini R."/>
            <person name="Aruoma O.I."/>
            <person name="Halliwell B."/>
        </authorList>
    </citation>
    <scope>BIOTECHNOLOGY</scope>
</reference>
<reference key="10">
    <citation type="journal article" date="1999" name="Clin. Sci.">
        <title>Uptake and antioxidant effects of ergothioneine in human erythrocytes.</title>
        <authorList>
            <person name="Mitsuyama H."/>
            <person name="May J.M."/>
        </authorList>
    </citation>
    <scope>BIOTECHNOLOGY</scope>
</reference>
<reference key="11">
    <citation type="journal article" date="2003" name="Biochem. Biophys. Res. Commun.">
        <title>Ergothioneine inhibits oxidative stress- and TNF-alpha-induced NF-kappa B activation and interleukin-8 release in alveolar epithelial cells.</title>
        <authorList>
            <person name="Rahman I."/>
            <person name="Gilmour P.S."/>
            <person name="Jimenez L.A."/>
            <person name="Biswas S.K."/>
            <person name="Antonicelli F."/>
            <person name="Aruoma O.I."/>
        </authorList>
    </citation>
    <scope>BIOTECHNOLOGY</scope>
</reference>
<reference key="12">
    <citation type="journal article" date="2008" name="BioFactors">
        <title>Modulation of palmitic acid-induced cell death by ergothioneine: evidence of an anti-inflammatory action.</title>
        <authorList>
            <person name="Laurenza I."/>
            <person name="Colognato R."/>
            <person name="Migliore L."/>
            <person name="Del Prato S."/>
            <person name="Benzi L."/>
        </authorList>
    </citation>
    <scope>BIOTECHNOLOGY</scope>
</reference>
<reference key="13">
    <citation type="journal article" date="2011" name="Chem. Res. Toxicol.">
        <title>Ergothioneine prevents copper-induced oxidative damage to DNA and protein by forming a redox-inactive ergothioneine-copper complex.</title>
        <authorList>
            <person name="Zhu B.Z."/>
            <person name="Mao L."/>
            <person name="Fan R.M."/>
            <person name="Zhu J.G."/>
            <person name="Zhang Y.N."/>
            <person name="Wang J."/>
            <person name="Kalyanaraman B."/>
            <person name="Frei B."/>
        </authorList>
    </citation>
    <scope>BIOTECHNOLOGY</scope>
</reference>
<reference key="14">
    <citation type="journal article" date="2012" name="Fungal Genet. Biol.">
        <title>The Neurospora crassa mutant NcDeltaEgt-1 identifies an ergothioneine biosynthetic gene and demonstrates that ergothioneine enhances conidial survival and protects against peroxide toxicity during conidial germination.</title>
        <authorList>
            <person name="Bello M.H."/>
            <person name="Barrera-Perez V."/>
            <person name="Morin D."/>
            <person name="Epstein L."/>
        </authorList>
    </citation>
    <scope>FUNCTION</scope>
    <scope>DISRUPTION PHENOTYPE</scope>
</reference>
<reference key="15">
    <citation type="journal article" date="2014" name="Fungal Genet. Biol.">
        <title>Endogenous ergothioneine is required for wild type levels of conidiogenesis and conidial survival but does not protect against 254 nm UV-induced mutagenesis or kill.</title>
        <authorList>
            <person name="Bello M.H."/>
            <person name="Mogannam J.C."/>
            <person name="Morin D."/>
            <person name="Epstein L."/>
        </authorList>
    </citation>
    <scope>FUNCTION</scope>
</reference>
<reference key="16">
    <citation type="journal article" date="2014" name="Org. Lett.">
        <title>Bioinformatic and biochemical characterizations of C-S bond formation and cleavage enzymes in the fungus Neurospora crassa ergothioneine biosynthetic pathway.</title>
        <authorList>
            <person name="Hu W."/>
            <person name="Song H."/>
            <person name="Sae Her A."/>
            <person name="Bak D.W."/>
            <person name="Naowarojna N."/>
            <person name="Elliott S.J."/>
            <person name="Qin L."/>
            <person name="Chen X."/>
            <person name="Liu P."/>
        </authorList>
    </citation>
    <scope>CATALYTIC ACTIVITY</scope>
    <scope>BIOPHYSICOCHEMICAL PROPERTIES</scope>
    <scope>COFACTOR</scope>
</reference>
<reference key="17">
    <citation type="journal article" date="2023" name="J. Am. Chem. Soc.">
        <title>Polystyrene upcycling into fungal natural products and a biocontrol agent.</title>
        <authorList>
            <person name="Rabot C."/>
            <person name="Chen Y."/>
            <person name="Lin S.Y."/>
            <person name="Miller B."/>
            <person name="Chiang Y.M."/>
            <person name="Oakley C.E."/>
            <person name="Oakley B.R."/>
            <person name="Wang C.C.C."/>
            <person name="Williams T.J."/>
        </authorList>
    </citation>
    <scope>FUNCTION</scope>
    <scope>BIOTECHNOLOGY</scope>
</reference>
<proteinExistence type="evidence at protein level"/>
<protein>
    <recommendedName>
        <fullName evidence="21">Ergothioneine biosynthesis protein 1</fullName>
    </recommendedName>
    <domain>
        <recommendedName>
            <fullName evidence="24">L-histidine N(alpha)-methyltransferase</fullName>
            <ecNumber evidence="18">2.1.1.44</ecNumber>
        </recommendedName>
    </domain>
    <domain>
        <recommendedName>
            <fullName evidence="23">Hercynylcysteine S-oxide synthase</fullName>
            <ecNumber evidence="13 16">1.21.3.10</ecNumber>
        </recommendedName>
    </domain>
</protein>
<dbReference type="EC" id="2.1.1.44" evidence="18"/>
<dbReference type="EC" id="1.21.3.10" evidence="13 16"/>
<dbReference type="EMBL" id="CM002239">
    <property type="protein sequence ID" value="EAA27088.3"/>
    <property type="molecule type" value="Genomic_DNA"/>
</dbReference>
<dbReference type="RefSeq" id="XP_956324.3">
    <property type="nucleotide sequence ID" value="XM_951231.3"/>
</dbReference>
<dbReference type="SMR" id="Q7RX33"/>
<dbReference type="STRING" id="367110.Q7RX33"/>
<dbReference type="PaxDb" id="5141-EFNCRP00000005253"/>
<dbReference type="EnsemblFungi" id="EAA27088">
    <property type="protein sequence ID" value="EAA27088"/>
    <property type="gene ID" value="NCU04343"/>
</dbReference>
<dbReference type="GeneID" id="3872471"/>
<dbReference type="KEGG" id="ncr:NCU04343"/>
<dbReference type="VEuPathDB" id="FungiDB:NCU04343"/>
<dbReference type="HOGENOM" id="CLU_006921_0_1_1"/>
<dbReference type="InParanoid" id="Q7RX33"/>
<dbReference type="OrthoDB" id="659at2759"/>
<dbReference type="BioCyc" id="MetaCyc:MONOMER-18845"/>
<dbReference type="BRENDA" id="1.14.99.51">
    <property type="organism ID" value="3627"/>
</dbReference>
<dbReference type="SABIO-RK" id="Q7RX33"/>
<dbReference type="UniPathway" id="UPA01014"/>
<dbReference type="Proteomes" id="UP000001805">
    <property type="component" value="Chromosome 4, Linkage Group IV"/>
</dbReference>
<dbReference type="GO" id="GO:0005737">
    <property type="term" value="C:cytoplasm"/>
    <property type="evidence" value="ECO:0007669"/>
    <property type="project" value="UniProtKB-SubCell"/>
</dbReference>
<dbReference type="GO" id="GO:0005634">
    <property type="term" value="C:nucleus"/>
    <property type="evidence" value="ECO:0007669"/>
    <property type="project" value="UniProtKB-SubCell"/>
</dbReference>
<dbReference type="GO" id="GO:0061686">
    <property type="term" value="F:hercynylcysteine sulfoxide synthase activity"/>
    <property type="evidence" value="ECO:0007669"/>
    <property type="project" value="RHEA"/>
</dbReference>
<dbReference type="GO" id="GO:0052706">
    <property type="term" value="F:L-histidine N(alpha)-methyltransferase activity"/>
    <property type="evidence" value="ECO:0007669"/>
    <property type="project" value="UniProtKB-EC"/>
</dbReference>
<dbReference type="GO" id="GO:0046872">
    <property type="term" value="F:metal ion binding"/>
    <property type="evidence" value="ECO:0007669"/>
    <property type="project" value="UniProtKB-KW"/>
</dbReference>
<dbReference type="GO" id="GO:0032259">
    <property type="term" value="P:methylation"/>
    <property type="evidence" value="ECO:0007669"/>
    <property type="project" value="UniProtKB-KW"/>
</dbReference>
<dbReference type="Gene3D" id="3.90.1580.10">
    <property type="entry name" value="paralog of FGE (formylglycine-generating enzyme)"/>
    <property type="match status" value="1"/>
</dbReference>
<dbReference type="Gene3D" id="3.40.50.150">
    <property type="entry name" value="Vaccinia Virus protein VP39"/>
    <property type="match status" value="1"/>
</dbReference>
<dbReference type="InterPro" id="IPR016187">
    <property type="entry name" value="CTDL_fold"/>
</dbReference>
<dbReference type="InterPro" id="IPR051128">
    <property type="entry name" value="EgtD_Methyltrsf_superfamily"/>
</dbReference>
<dbReference type="InterPro" id="IPR019257">
    <property type="entry name" value="MeTrfase_dom"/>
</dbReference>
<dbReference type="InterPro" id="IPR029063">
    <property type="entry name" value="SAM-dependent_MTases_sf"/>
</dbReference>
<dbReference type="InterPro" id="IPR017805">
    <property type="entry name" value="SAM_MeTrfase_EasF-type_put"/>
</dbReference>
<dbReference type="InterPro" id="IPR005532">
    <property type="entry name" value="SUMF_dom"/>
</dbReference>
<dbReference type="InterPro" id="IPR042095">
    <property type="entry name" value="SUMF_sf"/>
</dbReference>
<dbReference type="NCBIfam" id="TIGR03439">
    <property type="entry name" value="methyl_EasF"/>
    <property type="match status" value="1"/>
</dbReference>
<dbReference type="PANTHER" id="PTHR43397">
    <property type="entry name" value="ERGOTHIONEINE BIOSYNTHESIS PROTEIN 1"/>
    <property type="match status" value="1"/>
</dbReference>
<dbReference type="PANTHER" id="PTHR43397:SF1">
    <property type="entry name" value="ERGOTHIONEINE BIOSYNTHESIS PROTEIN 1"/>
    <property type="match status" value="1"/>
</dbReference>
<dbReference type="Pfam" id="PF03781">
    <property type="entry name" value="FGE-sulfatase"/>
    <property type="match status" value="2"/>
</dbReference>
<dbReference type="Pfam" id="PF10017">
    <property type="entry name" value="Methyltransf_33"/>
    <property type="match status" value="1"/>
</dbReference>
<dbReference type="SUPFAM" id="SSF56436">
    <property type="entry name" value="C-type lectin-like"/>
    <property type="match status" value="1"/>
</dbReference>
<sequence>MPSAESMTPSSALGQLKATGQHVLSKLQQQTSNADIIDIRRVAVEINLKTEITSMFRPKDGPRQLPTLLLYNERGLQLFERITYLEEYYLTNDEIKILTKHATEMASFIPSGAMIIELGSGNLRKVNLLLEALDNAGKAIDYYALDLSREELERTLAQVPSYKHVKCHGLLGTYDDGRDWLKAPENINKQKCILHLGSSIGNFNRSDAATFLKGFTDVLGPNDKMLIGVDACNDPARVYHAYNDKVGITHEFILNGLRNANEIIGETAFIEGDWRVIGEYVYDEEGGRHQAFYAPTRDTMVMGELIRSHDRIQIEQSLKYSKEESERLWSTAGLEQVSEWTYGNEYGLHLLAKSRMSFSLIPSVYARSALPTLDDWEALWATWDVVTRQMLPQEELLEKPIKLRNACIFYLGHIPTFLDIQLTKTTKQAPSEPAHFCKIFERGIDPDVDNPELCHAHSEIPDEWPPVEEILTYQETVRSRLRGLYAHGIANIPRNVGRAIWVGFEHELMHIETLLYMMLQSDKTLIPTHIPRPDFDKLARKAESERVPNQWFKIPAQEITIGLDDPEDGSDINKHYGWDNEKPPRRVQVAAFQAQGRPITNEEYAQYLLEKNIDKLPASWARLDNENISNGTTNSVSGHHSNRTSKQQLPSSFLEKTAVRTVYGLVPLKHALDWPVFASYDELAGCAAYMGGRIPTFEETRSIYAYADALKKKKEAERQLGRTVPAVNAHLTNNGVEITPPSSPSSETPAESSSPSDSNTTLITTEDLFSDLDGANVGFHNWHPMPITSKGNTLVGQGELGGVWEWTSSVLRKWEGFEPMELYPGYTADFFDEKHNIVLGGSWATHPRIAGRKSFVNWYQRNYPYAWVGARVVRDL</sequence>
<feature type="chain" id="PRO_0000434987" description="Ergothioneine biosynthesis protein 1">
    <location>
        <begin position="1"/>
        <end position="876"/>
    </location>
</feature>
<feature type="region of interest" description="L-histidine N(alpha)-methyltransferase" evidence="22">
    <location>
        <begin position="36"/>
        <end position="350"/>
    </location>
</feature>
<feature type="region of interest" description="Hercynylcysteine S-oxide synthase" evidence="22">
    <location>
        <begin position="378"/>
        <end position="874"/>
    </location>
</feature>
<feature type="region of interest" description="Disordered" evidence="4">
    <location>
        <begin position="631"/>
        <end position="650"/>
    </location>
</feature>
<feature type="region of interest" description="Disordered" evidence="4">
    <location>
        <begin position="732"/>
        <end position="761"/>
    </location>
</feature>
<feature type="compositionally biased region" description="Low complexity" evidence="4">
    <location>
        <begin position="744"/>
        <end position="758"/>
    </location>
</feature>
<feature type="binding site" evidence="1">
    <location>
        <position position="88"/>
    </location>
    <ligand>
        <name>L-histidine</name>
        <dbReference type="ChEBI" id="CHEBI:57595"/>
    </ligand>
</feature>
<feature type="binding site" evidence="1">
    <location>
        <position position="119"/>
    </location>
    <ligand>
        <name>S-adenosyl-L-methionine</name>
        <dbReference type="ChEBI" id="CHEBI:59789"/>
    </ligand>
</feature>
<feature type="binding site" evidence="1">
    <location>
        <position position="125"/>
    </location>
    <ligand>
        <name>S-adenosyl-L-methionine</name>
        <dbReference type="ChEBI" id="CHEBI:59789"/>
    </ligand>
</feature>
<feature type="binding site" evidence="1">
    <location>
        <position position="146"/>
    </location>
    <ligand>
        <name>S-adenosyl-L-methionine</name>
        <dbReference type="ChEBI" id="CHEBI:59789"/>
    </ligand>
</feature>
<feature type="binding site" evidence="1">
    <location>
        <position position="202"/>
    </location>
    <ligand>
        <name>L-histidine</name>
        <dbReference type="ChEBI" id="CHEBI:57595"/>
    </ligand>
</feature>
<feature type="binding site" evidence="1">
    <location>
        <position position="242"/>
    </location>
    <ligand>
        <name>L-histidine</name>
        <dbReference type="ChEBI" id="CHEBI:57595"/>
    </ligand>
</feature>
<feature type="binding site" evidence="1">
    <location>
        <begin position="315"/>
        <end position="317"/>
    </location>
    <ligand>
        <name>L-histidine</name>
        <dbReference type="ChEBI" id="CHEBI:57595"/>
    </ligand>
</feature>
<feature type="binding site" evidence="2">
    <location>
        <position position="413"/>
    </location>
    <ligand>
        <name>Fe cation</name>
        <dbReference type="ChEBI" id="CHEBI:24875"/>
    </ligand>
</feature>
<feature type="binding site" evidence="2">
    <location>
        <position position="506"/>
    </location>
    <ligand>
        <name>Fe cation</name>
        <dbReference type="ChEBI" id="CHEBI:24875"/>
    </ligand>
</feature>
<feature type="binding site" evidence="2">
    <location>
        <position position="510"/>
    </location>
    <ligand>
        <name>Fe cation</name>
        <dbReference type="ChEBI" id="CHEBI:24875"/>
    </ligand>
</feature>
<organism>
    <name type="scientific">Neurospora crassa (strain ATCC 24698 / 74-OR23-1A / CBS 708.71 / DSM 1257 / FGSC 987)</name>
    <dbReference type="NCBI Taxonomy" id="367110"/>
    <lineage>
        <taxon>Eukaryota</taxon>
        <taxon>Fungi</taxon>
        <taxon>Dikarya</taxon>
        <taxon>Ascomycota</taxon>
        <taxon>Pezizomycotina</taxon>
        <taxon>Sordariomycetes</taxon>
        <taxon>Sordariomycetidae</taxon>
        <taxon>Sordariales</taxon>
        <taxon>Sordariaceae</taxon>
        <taxon>Neurospora</taxon>
    </lineage>
</organism>
<comment type="function">
    <text evidence="12 14 15">Catalyzes the SAM-dependent triple methylation of the alpha-amino group of histidine to form hercynine and subsequent conjugation with cysteine and oxygen to form hercynylcysteine sulfoxide, the first two steps in the biosynthesis pathway of ergothioneine (PubMed:22209968, PubMed:36779837). Ergothioneine is an unusual thio-histidine betaine amino acid that acts as an antioxidant against peroxide in conidia and contributes to conidial longevity (PubMed:22209968, PubMed:25446508).</text>
</comment>
<comment type="catalytic activity">
    <reaction evidence="18">
        <text>L-histidine + 3 S-adenosyl-L-methionine = hercynine + 3 S-adenosyl-L-homocysteine + 3 H(+)</text>
        <dbReference type="Rhea" id="RHEA:38471"/>
        <dbReference type="ChEBI" id="CHEBI:15378"/>
        <dbReference type="ChEBI" id="CHEBI:15781"/>
        <dbReference type="ChEBI" id="CHEBI:57595"/>
        <dbReference type="ChEBI" id="CHEBI:57856"/>
        <dbReference type="ChEBI" id="CHEBI:59789"/>
        <dbReference type="EC" id="2.1.1.44"/>
    </reaction>
</comment>
<comment type="catalytic activity">
    <reaction evidence="13 16">
        <text>hercynine + L-cysteine + O2 = S-(hercyn-2-yl)-L-cysteine S-oxide + H2O</text>
        <dbReference type="Rhea" id="RHEA:42704"/>
        <dbReference type="ChEBI" id="CHEBI:15377"/>
        <dbReference type="ChEBI" id="CHEBI:15379"/>
        <dbReference type="ChEBI" id="CHEBI:15781"/>
        <dbReference type="ChEBI" id="CHEBI:35235"/>
        <dbReference type="ChEBI" id="CHEBI:82706"/>
        <dbReference type="EC" id="1.21.3.10"/>
    </reaction>
</comment>
<comment type="cofactor">
    <cofactor evidence="13">
        <name>Fe(2+)</name>
        <dbReference type="ChEBI" id="CHEBI:29033"/>
    </cofactor>
    <text evidence="13">Binds 1 Fe(2+) ion per monomer.</text>
</comment>
<comment type="biophysicochemical properties">
    <kinetics>
        <KM evidence="13">436 uM for hercynine</KM>
        <KM evidence="13">603 uM for cysteine</KM>
    </kinetics>
</comment>
<comment type="pathway">
    <text evidence="12">Amino-acid biosynthesis; ergothioneine biosynthesis.</text>
</comment>
<comment type="subcellular location">
    <subcellularLocation>
        <location evidence="3">Cytoplasm</location>
    </subcellularLocation>
    <subcellularLocation>
        <location evidence="3">Nucleus</location>
    </subcellularLocation>
</comment>
<comment type="disruption phenotype">
    <text evidence="12">Does not produce ergothioneine in either conidia nor mycelia.</text>
</comment>
<comment type="biotechnology">
    <text evidence="5 6 7 8 9 10 11 15 17 19 20">Ergothioneine (EGT) exhibits antioxidant, anti-inflammatory and cytoprotective properties, leading to its growing application in the pharmaceutical and cosmetic industries (PubMed:10491340, PubMed:12646250, PubMed:1654816, PubMed:19509460, PubMed:2172707, PubMed:36779837). Also shows UV and gamma radiation protection activities (PubMed:563295). Finally it acts as a cation chelator and a regulator of glycolytic metabolism (PubMed:189946, PubMed:21047085, PubMed:5000475, PubMed:7139821).</text>
</comment>
<comment type="similarity">
    <text evidence="22">In the N-terminal section; belongs to the methyltransferase superfamily. EgtD family.</text>
</comment>
<comment type="similarity">
    <text evidence="22">In the C-terminal section; belongs to the EgtB family.</text>
</comment>
<gene>
    <name evidence="21" type="primary">egt-1</name>
    <name type="ORF">NCU04343</name>
</gene>
<keyword id="KW-0963">Cytoplasm</keyword>
<keyword id="KW-0408">Iron</keyword>
<keyword id="KW-0479">Metal-binding</keyword>
<keyword id="KW-0489">Methyltransferase</keyword>
<keyword id="KW-0539">Nucleus</keyword>
<keyword id="KW-0560">Oxidoreductase</keyword>
<keyword id="KW-1185">Reference proteome</keyword>
<keyword id="KW-0949">S-adenosyl-L-methionine</keyword>
<keyword id="KW-0808">Transferase</keyword>